<reference key="1">
    <citation type="submission" date="2009-03" db="EMBL/GenBank/DDBJ databases">
        <title>Comparison of the complete genome sequences of Rhodococcus erythropolis PR4 and Rhodococcus opacus B4.</title>
        <authorList>
            <person name="Takarada H."/>
            <person name="Sekine M."/>
            <person name="Hosoyama A."/>
            <person name="Yamada R."/>
            <person name="Fujisawa T."/>
            <person name="Omata S."/>
            <person name="Shimizu A."/>
            <person name="Tsukatani N."/>
            <person name="Tanikawa S."/>
            <person name="Fujita N."/>
            <person name="Harayama S."/>
        </authorList>
    </citation>
    <scope>NUCLEOTIDE SEQUENCE [LARGE SCALE GENOMIC DNA]</scope>
    <source>
        <strain>B4</strain>
    </source>
</reference>
<protein>
    <recommendedName>
        <fullName evidence="1">Small ribosomal subunit protein uS4</fullName>
    </recommendedName>
    <alternativeName>
        <fullName evidence="2">30S ribosomal protein S4</fullName>
    </alternativeName>
</protein>
<dbReference type="EMBL" id="AP011115">
    <property type="protein sequence ID" value="BAH54461.1"/>
    <property type="molecule type" value="Genomic_DNA"/>
</dbReference>
<dbReference type="RefSeq" id="WP_005253863.1">
    <property type="nucleotide sequence ID" value="NC_012522.1"/>
</dbReference>
<dbReference type="SMR" id="C1B040"/>
<dbReference type="STRING" id="632772.ROP_62140"/>
<dbReference type="KEGG" id="rop:ROP_62140"/>
<dbReference type="PATRIC" id="fig|632772.20.peg.6490"/>
<dbReference type="HOGENOM" id="CLU_092403_0_2_11"/>
<dbReference type="OrthoDB" id="9803672at2"/>
<dbReference type="Proteomes" id="UP000002212">
    <property type="component" value="Chromosome"/>
</dbReference>
<dbReference type="GO" id="GO:0015935">
    <property type="term" value="C:small ribosomal subunit"/>
    <property type="evidence" value="ECO:0007669"/>
    <property type="project" value="InterPro"/>
</dbReference>
<dbReference type="GO" id="GO:0019843">
    <property type="term" value="F:rRNA binding"/>
    <property type="evidence" value="ECO:0007669"/>
    <property type="project" value="UniProtKB-UniRule"/>
</dbReference>
<dbReference type="GO" id="GO:0003735">
    <property type="term" value="F:structural constituent of ribosome"/>
    <property type="evidence" value="ECO:0007669"/>
    <property type="project" value="InterPro"/>
</dbReference>
<dbReference type="GO" id="GO:0042274">
    <property type="term" value="P:ribosomal small subunit biogenesis"/>
    <property type="evidence" value="ECO:0007669"/>
    <property type="project" value="TreeGrafter"/>
</dbReference>
<dbReference type="GO" id="GO:0006412">
    <property type="term" value="P:translation"/>
    <property type="evidence" value="ECO:0007669"/>
    <property type="project" value="UniProtKB-UniRule"/>
</dbReference>
<dbReference type="CDD" id="cd00165">
    <property type="entry name" value="S4"/>
    <property type="match status" value="1"/>
</dbReference>
<dbReference type="FunFam" id="3.10.290.10:FF:000001">
    <property type="entry name" value="30S ribosomal protein S4"/>
    <property type="match status" value="1"/>
</dbReference>
<dbReference type="Gene3D" id="1.10.1050.10">
    <property type="entry name" value="Ribosomal Protein S4 Delta 41, Chain A, domain 1"/>
    <property type="match status" value="1"/>
</dbReference>
<dbReference type="Gene3D" id="3.10.290.10">
    <property type="entry name" value="RNA-binding S4 domain"/>
    <property type="match status" value="1"/>
</dbReference>
<dbReference type="HAMAP" id="MF_01306_B">
    <property type="entry name" value="Ribosomal_uS4_B"/>
    <property type="match status" value="1"/>
</dbReference>
<dbReference type="InterPro" id="IPR022801">
    <property type="entry name" value="Ribosomal_uS4"/>
</dbReference>
<dbReference type="InterPro" id="IPR005709">
    <property type="entry name" value="Ribosomal_uS4_bac-type"/>
</dbReference>
<dbReference type="InterPro" id="IPR018079">
    <property type="entry name" value="Ribosomal_uS4_CS"/>
</dbReference>
<dbReference type="InterPro" id="IPR001912">
    <property type="entry name" value="Ribosomal_uS4_N"/>
</dbReference>
<dbReference type="InterPro" id="IPR002942">
    <property type="entry name" value="S4_RNA-bd"/>
</dbReference>
<dbReference type="InterPro" id="IPR036986">
    <property type="entry name" value="S4_RNA-bd_sf"/>
</dbReference>
<dbReference type="NCBIfam" id="NF003717">
    <property type="entry name" value="PRK05327.1"/>
    <property type="match status" value="1"/>
</dbReference>
<dbReference type="NCBIfam" id="TIGR01017">
    <property type="entry name" value="rpsD_bact"/>
    <property type="match status" value="1"/>
</dbReference>
<dbReference type="PANTHER" id="PTHR11831">
    <property type="entry name" value="30S 40S RIBOSOMAL PROTEIN"/>
    <property type="match status" value="1"/>
</dbReference>
<dbReference type="PANTHER" id="PTHR11831:SF4">
    <property type="entry name" value="SMALL RIBOSOMAL SUBUNIT PROTEIN US4M"/>
    <property type="match status" value="1"/>
</dbReference>
<dbReference type="Pfam" id="PF00163">
    <property type="entry name" value="Ribosomal_S4"/>
    <property type="match status" value="1"/>
</dbReference>
<dbReference type="Pfam" id="PF01479">
    <property type="entry name" value="S4"/>
    <property type="match status" value="1"/>
</dbReference>
<dbReference type="SMART" id="SM01390">
    <property type="entry name" value="Ribosomal_S4"/>
    <property type="match status" value="1"/>
</dbReference>
<dbReference type="SMART" id="SM00363">
    <property type="entry name" value="S4"/>
    <property type="match status" value="1"/>
</dbReference>
<dbReference type="SUPFAM" id="SSF55174">
    <property type="entry name" value="Alpha-L RNA-binding motif"/>
    <property type="match status" value="1"/>
</dbReference>
<dbReference type="PROSITE" id="PS00632">
    <property type="entry name" value="RIBOSOMAL_S4"/>
    <property type="match status" value="1"/>
</dbReference>
<dbReference type="PROSITE" id="PS50889">
    <property type="entry name" value="S4"/>
    <property type="match status" value="1"/>
</dbReference>
<sequence length="201" mass="23452">MARYTGPITRKSRRLRVDLVGGDQAFERRPYPPGQHGRARIKESEYLLQLQEKQKARFTYGVMEKQFRLYYKEANNRPGKTGENLLRILESRLDNVVYRAGLARTRRQARQLVTHGHLLVNNKKVDIPSYRVSQYDIIDVKEKSLSTLPFQVARETQGDRPIPGWLQVVGGRLRVLVHQLPERAQIDVPLQEQLIVEYYSK</sequence>
<gene>
    <name evidence="1" type="primary">rpsD</name>
    <name type="ordered locus">ROP_62140</name>
</gene>
<evidence type="ECO:0000255" key="1">
    <source>
        <dbReference type="HAMAP-Rule" id="MF_01306"/>
    </source>
</evidence>
<evidence type="ECO:0000305" key="2"/>
<accession>C1B040</accession>
<keyword id="KW-0687">Ribonucleoprotein</keyword>
<keyword id="KW-0689">Ribosomal protein</keyword>
<keyword id="KW-0694">RNA-binding</keyword>
<keyword id="KW-0699">rRNA-binding</keyword>
<name>RS4_RHOOB</name>
<proteinExistence type="inferred from homology"/>
<comment type="function">
    <text evidence="1">One of the primary rRNA binding proteins, it binds directly to 16S rRNA where it nucleates assembly of the body of the 30S subunit.</text>
</comment>
<comment type="function">
    <text evidence="1">With S5 and S12 plays an important role in translational accuracy.</text>
</comment>
<comment type="subunit">
    <text evidence="1">Part of the 30S ribosomal subunit. Contacts protein S5. The interaction surface between S4 and S5 is involved in control of translational fidelity.</text>
</comment>
<comment type="similarity">
    <text evidence="1">Belongs to the universal ribosomal protein uS4 family.</text>
</comment>
<organism>
    <name type="scientific">Rhodococcus opacus (strain B4)</name>
    <dbReference type="NCBI Taxonomy" id="632772"/>
    <lineage>
        <taxon>Bacteria</taxon>
        <taxon>Bacillati</taxon>
        <taxon>Actinomycetota</taxon>
        <taxon>Actinomycetes</taxon>
        <taxon>Mycobacteriales</taxon>
        <taxon>Nocardiaceae</taxon>
        <taxon>Rhodococcus</taxon>
    </lineage>
</organism>
<feature type="chain" id="PRO_1000165421" description="Small ribosomal subunit protein uS4">
    <location>
        <begin position="1"/>
        <end position="201"/>
    </location>
</feature>
<feature type="domain" description="S4 RNA-binding" evidence="1">
    <location>
        <begin position="91"/>
        <end position="155"/>
    </location>
</feature>